<comment type="cofactor">
    <cofactor evidence="1">
        <name>Fe(2+)</name>
        <dbReference type="ChEBI" id="CHEBI:29033"/>
    </cofactor>
    <text evidence="1">Binds 1 Fe(2+) ion per subunit.</text>
</comment>
<comment type="cofactor">
    <cofactor evidence="1">
        <name>L-ascorbate</name>
        <dbReference type="ChEBI" id="CHEBI:38290"/>
    </cofactor>
</comment>
<evidence type="ECO:0000255" key="1">
    <source>
        <dbReference type="HAMAP-Rule" id="MF_00657"/>
    </source>
</evidence>
<protein>
    <recommendedName>
        <fullName evidence="1">PKHD-type hydroxylase CPS_3426</fullName>
        <ecNumber evidence="1">1.14.11.-</ecNumber>
    </recommendedName>
</protein>
<dbReference type="EC" id="1.14.11.-" evidence="1"/>
<dbReference type="EMBL" id="CP000083">
    <property type="protein sequence ID" value="AAZ28463.1"/>
    <property type="molecule type" value="Genomic_DNA"/>
</dbReference>
<dbReference type="RefSeq" id="WP_011044187.1">
    <property type="nucleotide sequence ID" value="NC_003910.7"/>
</dbReference>
<dbReference type="SMR" id="Q47YL9"/>
<dbReference type="STRING" id="167879.CPS_3426"/>
<dbReference type="KEGG" id="cps:CPS_3426"/>
<dbReference type="HOGENOM" id="CLU_106663_0_0_6"/>
<dbReference type="Proteomes" id="UP000000547">
    <property type="component" value="Chromosome"/>
</dbReference>
<dbReference type="GO" id="GO:0016706">
    <property type="term" value="F:2-oxoglutarate-dependent dioxygenase activity"/>
    <property type="evidence" value="ECO:0007669"/>
    <property type="project" value="UniProtKB-UniRule"/>
</dbReference>
<dbReference type="GO" id="GO:0005506">
    <property type="term" value="F:iron ion binding"/>
    <property type="evidence" value="ECO:0007669"/>
    <property type="project" value="UniProtKB-UniRule"/>
</dbReference>
<dbReference type="GO" id="GO:0031418">
    <property type="term" value="F:L-ascorbic acid binding"/>
    <property type="evidence" value="ECO:0007669"/>
    <property type="project" value="UniProtKB-KW"/>
</dbReference>
<dbReference type="GO" id="GO:0006974">
    <property type="term" value="P:DNA damage response"/>
    <property type="evidence" value="ECO:0007669"/>
    <property type="project" value="TreeGrafter"/>
</dbReference>
<dbReference type="GO" id="GO:0006879">
    <property type="term" value="P:intracellular iron ion homeostasis"/>
    <property type="evidence" value="ECO:0007669"/>
    <property type="project" value="TreeGrafter"/>
</dbReference>
<dbReference type="Gene3D" id="2.60.120.620">
    <property type="entry name" value="q2cbj1_9rhob like domain"/>
    <property type="match status" value="1"/>
</dbReference>
<dbReference type="Gene3D" id="4.10.860.20">
    <property type="entry name" value="Rabenosyn, Rab binding domain"/>
    <property type="match status" value="1"/>
</dbReference>
<dbReference type="HAMAP" id="MF_00657">
    <property type="entry name" value="Hydroxyl_YbiX"/>
    <property type="match status" value="1"/>
</dbReference>
<dbReference type="InterPro" id="IPR005123">
    <property type="entry name" value="Oxoglu/Fe-dep_dioxygenase_dom"/>
</dbReference>
<dbReference type="InterPro" id="IPR041097">
    <property type="entry name" value="PKHD_C"/>
</dbReference>
<dbReference type="InterPro" id="IPR023550">
    <property type="entry name" value="PKHD_hydroxylase"/>
</dbReference>
<dbReference type="InterPro" id="IPR006620">
    <property type="entry name" value="Pro_4_hyd_alph"/>
</dbReference>
<dbReference type="InterPro" id="IPR044862">
    <property type="entry name" value="Pro_4_hyd_alph_FE2OG_OXY"/>
</dbReference>
<dbReference type="NCBIfam" id="NF003974">
    <property type="entry name" value="PRK05467.1-3"/>
    <property type="match status" value="1"/>
</dbReference>
<dbReference type="NCBIfam" id="NF003975">
    <property type="entry name" value="PRK05467.1-4"/>
    <property type="match status" value="1"/>
</dbReference>
<dbReference type="PANTHER" id="PTHR41536">
    <property type="entry name" value="PKHD-TYPE HYDROXYLASE YBIX"/>
    <property type="match status" value="1"/>
</dbReference>
<dbReference type="PANTHER" id="PTHR41536:SF1">
    <property type="entry name" value="PKHD-TYPE HYDROXYLASE YBIX"/>
    <property type="match status" value="1"/>
</dbReference>
<dbReference type="Pfam" id="PF13640">
    <property type="entry name" value="2OG-FeII_Oxy_3"/>
    <property type="match status" value="1"/>
</dbReference>
<dbReference type="Pfam" id="PF18331">
    <property type="entry name" value="PKHD_C"/>
    <property type="match status" value="1"/>
</dbReference>
<dbReference type="SMART" id="SM00702">
    <property type="entry name" value="P4Hc"/>
    <property type="match status" value="1"/>
</dbReference>
<dbReference type="PROSITE" id="PS51471">
    <property type="entry name" value="FE2OG_OXY"/>
    <property type="match status" value="1"/>
</dbReference>
<feature type="chain" id="PRO_0000346476" description="PKHD-type hydroxylase CPS_3426">
    <location>
        <begin position="1"/>
        <end position="223"/>
    </location>
</feature>
<feature type="domain" description="Fe2OG dioxygenase" evidence="1">
    <location>
        <begin position="77"/>
        <end position="175"/>
    </location>
</feature>
<feature type="binding site" evidence="1">
    <location>
        <position position="96"/>
    </location>
    <ligand>
        <name>Fe cation</name>
        <dbReference type="ChEBI" id="CHEBI:24875"/>
    </ligand>
</feature>
<feature type="binding site" evidence="1">
    <location>
        <position position="98"/>
    </location>
    <ligand>
        <name>Fe cation</name>
        <dbReference type="ChEBI" id="CHEBI:24875"/>
    </ligand>
</feature>
<feature type="binding site" evidence="1">
    <location>
        <position position="156"/>
    </location>
    <ligand>
        <name>Fe cation</name>
        <dbReference type="ChEBI" id="CHEBI:24875"/>
    </ligand>
</feature>
<feature type="binding site" evidence="1">
    <location>
        <position position="166"/>
    </location>
    <ligand>
        <name>2-oxoglutarate</name>
        <dbReference type="ChEBI" id="CHEBI:16810"/>
    </ligand>
</feature>
<accession>Q47YL9</accession>
<proteinExistence type="inferred from homology"/>
<reference key="1">
    <citation type="journal article" date="2005" name="Proc. Natl. Acad. Sci. U.S.A.">
        <title>The psychrophilic lifestyle as revealed by the genome sequence of Colwellia psychrerythraea 34H through genomic and proteomic analyses.</title>
        <authorList>
            <person name="Methe B.A."/>
            <person name="Nelson K.E."/>
            <person name="Deming J.W."/>
            <person name="Momen B."/>
            <person name="Melamud E."/>
            <person name="Zhang X."/>
            <person name="Moult J."/>
            <person name="Madupu R."/>
            <person name="Nelson W.C."/>
            <person name="Dodson R.J."/>
            <person name="Brinkac L.M."/>
            <person name="Daugherty S.C."/>
            <person name="Durkin A.S."/>
            <person name="DeBoy R.T."/>
            <person name="Kolonay J.F."/>
            <person name="Sullivan S.A."/>
            <person name="Zhou L."/>
            <person name="Davidsen T.M."/>
            <person name="Wu M."/>
            <person name="Huston A.L."/>
            <person name="Lewis M."/>
            <person name="Weaver B."/>
            <person name="Weidman J.F."/>
            <person name="Khouri H."/>
            <person name="Utterback T.R."/>
            <person name="Feldblyum T.V."/>
            <person name="Fraser C.M."/>
        </authorList>
    </citation>
    <scope>NUCLEOTIDE SEQUENCE [LARGE SCALE GENOMIC DNA]</scope>
    <source>
        <strain>34H / ATCC BAA-681</strain>
    </source>
</reference>
<keyword id="KW-0223">Dioxygenase</keyword>
<keyword id="KW-0408">Iron</keyword>
<keyword id="KW-0479">Metal-binding</keyword>
<keyword id="KW-0560">Oxidoreductase</keyword>
<keyword id="KW-0847">Vitamin C</keyword>
<name>Y3426_COLP3</name>
<gene>
    <name type="ordered locus">CPS_3426</name>
</gene>
<organism>
    <name type="scientific">Colwellia psychrerythraea (strain 34H / ATCC BAA-681)</name>
    <name type="common">Vibrio psychroerythus</name>
    <dbReference type="NCBI Taxonomy" id="167879"/>
    <lineage>
        <taxon>Bacteria</taxon>
        <taxon>Pseudomonadati</taxon>
        <taxon>Pseudomonadota</taxon>
        <taxon>Gammaproteobacteria</taxon>
        <taxon>Alteromonadales</taxon>
        <taxon>Colwelliaceae</taxon>
        <taxon>Colwellia</taxon>
    </lineage>
</organism>
<sequence>MITKLPQVLSPIQVASIIQLIEHGSFNSGKDTAGWHAKAVKNNLQWQGETELNEQIQTGIQGALTQHPQFTGAAYAKSMMPFIISESTLGGGYGDHIDDALMVNETVLRTDISCTLFLTPPQDYEGGELVMNLSGMEMAFKLNAGDAIIYPSTTLHRVNPVTSGSRKVALTWIESHIPQASQREILFDLDCARKDIMEHHGKTDAFDRITKTHANLLRQWAMT</sequence>